<accession>Q71Y02</accession>
<sequence length="329" mass="36210">METIHFTKVHGSQNDFFLVDEEENHITEWSDEKRANFAIKLCDRKHSLGGADGILYVTKSSEVGPIGQMRVVNSDGSIASMCGNGLRTVARYLLEKHALTDAKVETMKAILDVKKATSLGFDIPTYQVEISPVKFAAETLPMHVGVEKLFNQVIPELDAELAFSAVSVPNPHLITFVDQAVLDSNKQEKLASYLNSENPYFPDGVNVSFVKRLSDDAIYVRTFERGVGFTNACGTAMSACSLIKKMLDNNILETPLNVYNDGGRVQVTAKKDAAGEISLQLIGNATFVSKGSVRYENDIVTELTNEATAEQAQYQALVKEVKEFLKTTE</sequence>
<evidence type="ECO:0000255" key="1">
    <source>
        <dbReference type="HAMAP-Rule" id="MF_00197"/>
    </source>
</evidence>
<reference key="1">
    <citation type="journal article" date="2004" name="Nucleic Acids Res.">
        <title>Whole genome comparisons of serotype 4b and 1/2a strains of the food-borne pathogen Listeria monocytogenes reveal new insights into the core genome components of this species.</title>
        <authorList>
            <person name="Nelson K.E."/>
            <person name="Fouts D.E."/>
            <person name="Mongodin E.F."/>
            <person name="Ravel J."/>
            <person name="DeBoy R.T."/>
            <person name="Kolonay J.F."/>
            <person name="Rasko D.A."/>
            <person name="Angiuoli S.V."/>
            <person name="Gill S.R."/>
            <person name="Paulsen I.T."/>
            <person name="Peterson J.D."/>
            <person name="White O."/>
            <person name="Nelson W.C."/>
            <person name="Nierman W.C."/>
            <person name="Beanan M.J."/>
            <person name="Brinkac L.M."/>
            <person name="Daugherty S.C."/>
            <person name="Dodson R.J."/>
            <person name="Durkin A.S."/>
            <person name="Madupu R."/>
            <person name="Haft D.H."/>
            <person name="Selengut J."/>
            <person name="Van Aken S.E."/>
            <person name="Khouri H.M."/>
            <person name="Fedorova N."/>
            <person name="Forberger H.A."/>
            <person name="Tran B."/>
            <person name="Kathariou S."/>
            <person name="Wonderling L.D."/>
            <person name="Uhlich G.A."/>
            <person name="Bayles D.O."/>
            <person name="Luchansky J.B."/>
            <person name="Fraser C.M."/>
        </authorList>
    </citation>
    <scope>NUCLEOTIDE SEQUENCE [LARGE SCALE GENOMIC DNA]</scope>
    <source>
        <strain>F2365</strain>
    </source>
</reference>
<protein>
    <recommendedName>
        <fullName evidence="1">Diaminopimelate epimerase</fullName>
        <shortName evidence="1">DAP epimerase</shortName>
        <ecNumber evidence="1">5.1.1.7</ecNumber>
    </recommendedName>
    <alternativeName>
        <fullName evidence="1">PLP-independent amino acid racemase</fullName>
    </alternativeName>
</protein>
<gene>
    <name evidence="1" type="primary">dapF</name>
    <name type="ordered locus">LMOf2365_2043</name>
</gene>
<name>DAPF_LISMF</name>
<dbReference type="EC" id="5.1.1.7" evidence="1"/>
<dbReference type="EMBL" id="AE017262">
    <property type="protein sequence ID" value="AAT04813.1"/>
    <property type="molecule type" value="Genomic_DNA"/>
</dbReference>
<dbReference type="RefSeq" id="WP_010958982.1">
    <property type="nucleotide sequence ID" value="NC_002973.6"/>
</dbReference>
<dbReference type="SMR" id="Q71Y02"/>
<dbReference type="DNASU" id="2797774"/>
<dbReference type="KEGG" id="lmf:LMOf2365_2043"/>
<dbReference type="HOGENOM" id="CLU_053306_3_1_9"/>
<dbReference type="UniPathway" id="UPA00034">
    <property type="reaction ID" value="UER00025"/>
</dbReference>
<dbReference type="GO" id="GO:0005829">
    <property type="term" value="C:cytosol"/>
    <property type="evidence" value="ECO:0007669"/>
    <property type="project" value="TreeGrafter"/>
</dbReference>
<dbReference type="GO" id="GO:0008837">
    <property type="term" value="F:diaminopimelate epimerase activity"/>
    <property type="evidence" value="ECO:0007669"/>
    <property type="project" value="UniProtKB-UniRule"/>
</dbReference>
<dbReference type="GO" id="GO:0009089">
    <property type="term" value="P:lysine biosynthetic process via diaminopimelate"/>
    <property type="evidence" value="ECO:0007669"/>
    <property type="project" value="UniProtKB-UniRule"/>
</dbReference>
<dbReference type="Gene3D" id="3.10.310.10">
    <property type="entry name" value="Diaminopimelate Epimerase, Chain A, domain 1"/>
    <property type="match status" value="2"/>
</dbReference>
<dbReference type="HAMAP" id="MF_00197">
    <property type="entry name" value="DAP_epimerase"/>
    <property type="match status" value="1"/>
</dbReference>
<dbReference type="InterPro" id="IPR018510">
    <property type="entry name" value="DAP_epimerase_AS"/>
</dbReference>
<dbReference type="InterPro" id="IPR001653">
    <property type="entry name" value="DAP_epimerase_DapF"/>
</dbReference>
<dbReference type="NCBIfam" id="TIGR00652">
    <property type="entry name" value="DapF"/>
    <property type="match status" value="1"/>
</dbReference>
<dbReference type="PANTHER" id="PTHR31689:SF0">
    <property type="entry name" value="DIAMINOPIMELATE EPIMERASE"/>
    <property type="match status" value="1"/>
</dbReference>
<dbReference type="PANTHER" id="PTHR31689">
    <property type="entry name" value="DIAMINOPIMELATE EPIMERASE, CHLOROPLASTIC"/>
    <property type="match status" value="1"/>
</dbReference>
<dbReference type="Pfam" id="PF01678">
    <property type="entry name" value="DAP_epimerase"/>
    <property type="match status" value="2"/>
</dbReference>
<dbReference type="SUPFAM" id="SSF54506">
    <property type="entry name" value="Diaminopimelate epimerase-like"/>
    <property type="match status" value="2"/>
</dbReference>
<dbReference type="PROSITE" id="PS01326">
    <property type="entry name" value="DAP_EPIMERASE"/>
    <property type="match status" value="1"/>
</dbReference>
<organism>
    <name type="scientific">Listeria monocytogenes serotype 4b (strain F2365)</name>
    <dbReference type="NCBI Taxonomy" id="265669"/>
    <lineage>
        <taxon>Bacteria</taxon>
        <taxon>Bacillati</taxon>
        <taxon>Bacillota</taxon>
        <taxon>Bacilli</taxon>
        <taxon>Bacillales</taxon>
        <taxon>Listeriaceae</taxon>
        <taxon>Listeria</taxon>
    </lineage>
</organism>
<proteinExistence type="inferred from homology"/>
<comment type="function">
    <text evidence="1">Catalyzes the stereoinversion of LL-2,6-diaminopimelate (L,L-DAP) to meso-diaminopimelate (meso-DAP), a precursor of L-lysine and an essential component of the bacterial peptidoglycan.</text>
</comment>
<comment type="catalytic activity">
    <reaction evidence="1">
        <text>(2S,6S)-2,6-diaminopimelate = meso-2,6-diaminopimelate</text>
        <dbReference type="Rhea" id="RHEA:15393"/>
        <dbReference type="ChEBI" id="CHEBI:57609"/>
        <dbReference type="ChEBI" id="CHEBI:57791"/>
        <dbReference type="EC" id="5.1.1.7"/>
    </reaction>
</comment>
<comment type="pathway">
    <text evidence="1">Amino-acid biosynthesis; L-lysine biosynthesis via DAP pathway; DL-2,6-diaminopimelate from LL-2,6-diaminopimelate: step 1/1.</text>
</comment>
<comment type="subunit">
    <text evidence="1">Homodimer.</text>
</comment>
<comment type="subcellular location">
    <subcellularLocation>
        <location evidence="1">Cytoplasm</location>
    </subcellularLocation>
</comment>
<comment type="similarity">
    <text evidence="1">Belongs to the diaminopimelate epimerase family.</text>
</comment>
<keyword id="KW-0028">Amino-acid biosynthesis</keyword>
<keyword id="KW-0963">Cytoplasm</keyword>
<keyword id="KW-0413">Isomerase</keyword>
<keyword id="KW-0457">Lysine biosynthesis</keyword>
<feature type="chain" id="PRO_0000149850" description="Diaminopimelate epimerase">
    <location>
        <begin position="1"/>
        <end position="329"/>
    </location>
</feature>
<feature type="active site" description="Proton donor" evidence="1">
    <location>
        <position position="82"/>
    </location>
</feature>
<feature type="active site" description="Proton acceptor" evidence="1">
    <location>
        <position position="233"/>
    </location>
</feature>
<feature type="binding site" evidence="1">
    <location>
        <position position="14"/>
    </location>
    <ligand>
        <name>substrate</name>
    </ligand>
</feature>
<feature type="binding site" evidence="1">
    <location>
        <position position="73"/>
    </location>
    <ligand>
        <name>substrate</name>
    </ligand>
</feature>
<feature type="binding site" evidence="1">
    <location>
        <begin position="83"/>
        <end position="84"/>
    </location>
    <ligand>
        <name>substrate</name>
    </ligand>
</feature>
<feature type="binding site" evidence="1">
    <location>
        <position position="170"/>
    </location>
    <ligand>
        <name>substrate</name>
    </ligand>
</feature>
<feature type="binding site" evidence="1">
    <location>
        <position position="206"/>
    </location>
    <ligand>
        <name>substrate</name>
    </ligand>
</feature>
<feature type="binding site" evidence="1">
    <location>
        <begin position="224"/>
        <end position="225"/>
    </location>
    <ligand>
        <name>substrate</name>
    </ligand>
</feature>
<feature type="binding site" evidence="1">
    <location>
        <begin position="234"/>
        <end position="235"/>
    </location>
    <ligand>
        <name>substrate</name>
    </ligand>
</feature>
<feature type="site" description="Could be important to modulate the pK values of the two catalytic cysteine residues" evidence="1">
    <location>
        <position position="172"/>
    </location>
</feature>
<feature type="site" description="Could be important to modulate the pK values of the two catalytic cysteine residues" evidence="1">
    <location>
        <position position="224"/>
    </location>
</feature>